<comment type="subcellular location">
    <subcellularLocation>
        <location evidence="1">Membrane</location>
        <topology evidence="1">Single-pass type I membrane protein</topology>
    </subcellularLocation>
</comment>
<comment type="similarity">
    <text evidence="5">Belongs to the immunoglobulin superfamily. BTN/MOG family.</text>
</comment>
<comment type="caution">
    <text evidence="5">Could be the product of a pseudogene.</text>
</comment>
<name>BT2A3_HUMAN</name>
<gene>
    <name type="primary">BTN2A3P</name>
    <name type="synonym">BTN2A3</name>
</gene>
<feature type="signal peptide" evidence="2">
    <location>
        <begin position="1"/>
        <end position="27"/>
    </location>
</feature>
<feature type="chain" id="PRO_0000014531" description="Putative butyrophilin subfamily 2 member A3">
    <location>
        <begin position="28"/>
        <end position="586"/>
    </location>
</feature>
<feature type="topological domain" description="Extracellular" evidence="2">
    <location>
        <begin position="28"/>
        <end position="246"/>
    </location>
</feature>
<feature type="transmembrane region" description="Helical" evidence="2">
    <location>
        <begin position="247"/>
        <end position="267"/>
    </location>
</feature>
<feature type="topological domain" description="Cytoplasmic" evidence="2">
    <location>
        <begin position="268"/>
        <end position="586"/>
    </location>
</feature>
<feature type="domain" description="Ig-like V-type">
    <location>
        <begin position="28"/>
        <end position="139"/>
    </location>
</feature>
<feature type="domain" description="B30.2/SPRY" evidence="4">
    <location>
        <begin position="281"/>
        <end position="474"/>
    </location>
</feature>
<feature type="glycosylation site" description="N-linked (GlcNAc...) asparagine" evidence="2">
    <location>
        <position position="45"/>
    </location>
</feature>
<feature type="glycosylation site" description="N-linked (GlcNAc...) asparagine" evidence="2">
    <location>
        <position position="112"/>
    </location>
</feature>
<feature type="glycosylation site" description="N-linked (GlcNAc...) asparagine" evidence="2">
    <location>
        <position position="214"/>
    </location>
</feature>
<feature type="glycosylation site" description="N-linked (GlcNAc...) asparagine" evidence="2">
    <location>
        <position position="220"/>
    </location>
</feature>
<feature type="disulfide bond" evidence="3">
    <location>
        <begin position="50"/>
        <end position="123"/>
    </location>
</feature>
<feature type="sequence variant" id="VAR_049830" description="In dbSNP:rs7745238.">
    <original>G</original>
    <variation>D</variation>
    <location>
        <position position="79"/>
    </location>
</feature>
<feature type="sequence variant" id="VAR_049831" description="In dbSNP:rs10946829.">
    <original>V</original>
    <variation>I</variation>
    <location>
        <position position="148"/>
    </location>
</feature>
<feature type="sequence variant" id="VAR_049832" description="In dbSNP:rs2893848.">
    <original>N</original>
    <variation>S</variation>
    <location>
        <position position="300"/>
    </location>
</feature>
<organism>
    <name type="scientific">Homo sapiens</name>
    <name type="common">Human</name>
    <dbReference type="NCBI Taxonomy" id="9606"/>
    <lineage>
        <taxon>Eukaryota</taxon>
        <taxon>Metazoa</taxon>
        <taxon>Chordata</taxon>
        <taxon>Craniata</taxon>
        <taxon>Vertebrata</taxon>
        <taxon>Euteleostomi</taxon>
        <taxon>Mammalia</taxon>
        <taxon>Eutheria</taxon>
        <taxon>Euarchontoglires</taxon>
        <taxon>Primates</taxon>
        <taxon>Haplorrhini</taxon>
        <taxon>Catarrhini</taxon>
        <taxon>Hominidae</taxon>
        <taxon>Homo</taxon>
    </lineage>
</organism>
<accession>Q96KV6</accession>
<accession>A6NEF4</accession>
<keyword id="KW-1015">Disulfide bond</keyword>
<keyword id="KW-0325">Glycoprotein</keyword>
<keyword id="KW-0393">Immunoglobulin domain</keyword>
<keyword id="KW-0472">Membrane</keyword>
<keyword id="KW-1185">Reference proteome</keyword>
<keyword id="KW-0732">Signal</keyword>
<keyword id="KW-0812">Transmembrane</keyword>
<keyword id="KW-1133">Transmembrane helix</keyword>
<reference key="1">
    <citation type="journal article" date="2003" name="Nature">
        <title>The DNA sequence and analysis of human chromosome 6.</title>
        <authorList>
            <person name="Mungall A.J."/>
            <person name="Palmer S.A."/>
            <person name="Sims S.K."/>
            <person name="Edwards C.A."/>
            <person name="Ashurst J.L."/>
            <person name="Wilming L."/>
            <person name="Jones M.C."/>
            <person name="Horton R."/>
            <person name="Hunt S.E."/>
            <person name="Scott C.E."/>
            <person name="Gilbert J.G.R."/>
            <person name="Clamp M.E."/>
            <person name="Bethel G."/>
            <person name="Milne S."/>
            <person name="Ainscough R."/>
            <person name="Almeida J.P."/>
            <person name="Ambrose K.D."/>
            <person name="Andrews T.D."/>
            <person name="Ashwell R.I.S."/>
            <person name="Babbage A.K."/>
            <person name="Bagguley C.L."/>
            <person name="Bailey J."/>
            <person name="Banerjee R."/>
            <person name="Barker D.J."/>
            <person name="Barlow K.F."/>
            <person name="Bates K."/>
            <person name="Beare D.M."/>
            <person name="Beasley H."/>
            <person name="Beasley O."/>
            <person name="Bird C.P."/>
            <person name="Blakey S.E."/>
            <person name="Bray-Allen S."/>
            <person name="Brook J."/>
            <person name="Brown A.J."/>
            <person name="Brown J.Y."/>
            <person name="Burford D.C."/>
            <person name="Burrill W."/>
            <person name="Burton J."/>
            <person name="Carder C."/>
            <person name="Carter N.P."/>
            <person name="Chapman J.C."/>
            <person name="Clark S.Y."/>
            <person name="Clark G."/>
            <person name="Clee C.M."/>
            <person name="Clegg S."/>
            <person name="Cobley V."/>
            <person name="Collier R.E."/>
            <person name="Collins J.E."/>
            <person name="Colman L.K."/>
            <person name="Corby N.R."/>
            <person name="Coville G.J."/>
            <person name="Culley K.M."/>
            <person name="Dhami P."/>
            <person name="Davies J."/>
            <person name="Dunn M."/>
            <person name="Earthrowl M.E."/>
            <person name="Ellington A.E."/>
            <person name="Evans K.A."/>
            <person name="Faulkner L."/>
            <person name="Francis M.D."/>
            <person name="Frankish A."/>
            <person name="Frankland J."/>
            <person name="French L."/>
            <person name="Garner P."/>
            <person name="Garnett J."/>
            <person name="Ghori M.J."/>
            <person name="Gilby L.M."/>
            <person name="Gillson C.J."/>
            <person name="Glithero R.J."/>
            <person name="Grafham D.V."/>
            <person name="Grant M."/>
            <person name="Gribble S."/>
            <person name="Griffiths C."/>
            <person name="Griffiths M.N.D."/>
            <person name="Hall R."/>
            <person name="Halls K.S."/>
            <person name="Hammond S."/>
            <person name="Harley J.L."/>
            <person name="Hart E.A."/>
            <person name="Heath P.D."/>
            <person name="Heathcott R."/>
            <person name="Holmes S.J."/>
            <person name="Howden P.J."/>
            <person name="Howe K.L."/>
            <person name="Howell G.R."/>
            <person name="Huckle E."/>
            <person name="Humphray S.J."/>
            <person name="Humphries M.D."/>
            <person name="Hunt A.R."/>
            <person name="Johnson C.M."/>
            <person name="Joy A.A."/>
            <person name="Kay M."/>
            <person name="Keenan S.J."/>
            <person name="Kimberley A.M."/>
            <person name="King A."/>
            <person name="Laird G.K."/>
            <person name="Langford C."/>
            <person name="Lawlor S."/>
            <person name="Leongamornlert D.A."/>
            <person name="Leversha M."/>
            <person name="Lloyd C.R."/>
            <person name="Lloyd D.M."/>
            <person name="Loveland J.E."/>
            <person name="Lovell J."/>
            <person name="Martin S."/>
            <person name="Mashreghi-Mohammadi M."/>
            <person name="Maslen G.L."/>
            <person name="Matthews L."/>
            <person name="McCann O.T."/>
            <person name="McLaren S.J."/>
            <person name="McLay K."/>
            <person name="McMurray A."/>
            <person name="Moore M.J.F."/>
            <person name="Mullikin J.C."/>
            <person name="Niblett D."/>
            <person name="Nickerson T."/>
            <person name="Novik K.L."/>
            <person name="Oliver K."/>
            <person name="Overton-Larty E.K."/>
            <person name="Parker A."/>
            <person name="Patel R."/>
            <person name="Pearce A.V."/>
            <person name="Peck A.I."/>
            <person name="Phillimore B.J.C.T."/>
            <person name="Phillips S."/>
            <person name="Plumb R.W."/>
            <person name="Porter K.M."/>
            <person name="Ramsey Y."/>
            <person name="Ranby S.A."/>
            <person name="Rice C.M."/>
            <person name="Ross M.T."/>
            <person name="Searle S.M."/>
            <person name="Sehra H.K."/>
            <person name="Sheridan E."/>
            <person name="Skuce C.D."/>
            <person name="Smith S."/>
            <person name="Smith M."/>
            <person name="Spraggon L."/>
            <person name="Squares S.L."/>
            <person name="Steward C.A."/>
            <person name="Sycamore N."/>
            <person name="Tamlyn-Hall G."/>
            <person name="Tester J."/>
            <person name="Theaker A.J."/>
            <person name="Thomas D.W."/>
            <person name="Thorpe A."/>
            <person name="Tracey A."/>
            <person name="Tromans A."/>
            <person name="Tubby B."/>
            <person name="Wall M."/>
            <person name="Wallis J.M."/>
            <person name="West A.P."/>
            <person name="White S.S."/>
            <person name="Whitehead S.L."/>
            <person name="Whittaker H."/>
            <person name="Wild A."/>
            <person name="Willey D.J."/>
            <person name="Wilmer T.E."/>
            <person name="Wood J.M."/>
            <person name="Wray P.W."/>
            <person name="Wyatt J.C."/>
            <person name="Young L."/>
            <person name="Younger R.M."/>
            <person name="Bentley D.R."/>
            <person name="Coulson A."/>
            <person name="Durbin R.M."/>
            <person name="Hubbard T."/>
            <person name="Sulston J.E."/>
            <person name="Dunham I."/>
            <person name="Rogers J."/>
            <person name="Beck S."/>
        </authorList>
    </citation>
    <scope>NUCLEOTIDE SEQUENCE [LARGE SCALE GENOMIC DNA]</scope>
</reference>
<reference key="2">
    <citation type="submission" date="2005-07" db="EMBL/GenBank/DDBJ databases">
        <authorList>
            <person name="Mural R.J."/>
            <person name="Istrail S."/>
            <person name="Sutton G.G."/>
            <person name="Florea L."/>
            <person name="Halpern A.L."/>
            <person name="Mobarry C.M."/>
            <person name="Lippert R."/>
            <person name="Walenz B."/>
            <person name="Shatkay H."/>
            <person name="Dew I."/>
            <person name="Miller J.R."/>
            <person name="Flanigan M.J."/>
            <person name="Edwards N.J."/>
            <person name="Bolanos R."/>
            <person name="Fasulo D."/>
            <person name="Halldorsson B.V."/>
            <person name="Hannenhalli S."/>
            <person name="Turner R."/>
            <person name="Yooseph S."/>
            <person name="Lu F."/>
            <person name="Nusskern D.R."/>
            <person name="Shue B.C."/>
            <person name="Zheng X.H."/>
            <person name="Zhong F."/>
            <person name="Delcher A.L."/>
            <person name="Huson D.H."/>
            <person name="Kravitz S.A."/>
            <person name="Mouchard L."/>
            <person name="Reinert K."/>
            <person name="Remington K.A."/>
            <person name="Clark A.G."/>
            <person name="Waterman M.S."/>
            <person name="Eichler E.E."/>
            <person name="Adams M.D."/>
            <person name="Hunkapiller M.W."/>
            <person name="Myers E.W."/>
            <person name="Venter J.C."/>
        </authorList>
    </citation>
    <scope>NUCLEOTIDE SEQUENCE [LARGE SCALE GENOMIC DNA]</scope>
</reference>
<protein>
    <recommendedName>
        <fullName>Putative butyrophilin subfamily 2 member A3</fullName>
    </recommendedName>
</protein>
<sequence>MEPAAALHFSRPASLLLLLSLCALVSAQVTVVGPTDPILAMVGENTTLRCCLSPEENAEDMEVRWFQSQFSPAVFVYKGGRERTEEQKEEYRGRTTFVSKDSRGSVALIIHNVTAEDNGIYQCYFQEGRSCNEAILHLVVAGLDSEPVIEMRDHEDGGIQLECISGGWYPKPLTVWRDPYGEVVPALKEVSTPDADSLFMVTTAVIIRDKSVRNVSCSINDTLLGQKKESVIFIPESFMPSRSPCVVILPVIMIILMIPIAICIYWINNLQKEKKDSHLMTFNLCLSLAGWRRTFLHAANVVLDQDTGHPYLFVSEDKRSVTLDPSRESIPGNPERFDSQLCVLGQESFASGKHYLEVDVENVIEWTVGICRDNVERKWEVPLLPQNGFWTLEMHKRKYWALTSLKWILSLEEPLCQVGIFLDYEAGDVSFYNMRDRSHIYTFPHSAFSVPVRPFFSLGSYDSQILICSAFTGASGVTVPEEGWTLHRAGTHHSPQNQFPSLTAMETSPGHLSSHCTMPLVEDTPSSPLVTQENIFQLPLSHPLQTSAPVHLLIRCGFSSSFGCNYGMESRHRELVVPQLPARKKV</sequence>
<proteinExistence type="uncertain"/>
<evidence type="ECO:0000250" key="1"/>
<evidence type="ECO:0000255" key="2"/>
<evidence type="ECO:0000255" key="3">
    <source>
        <dbReference type="PROSITE-ProRule" id="PRU00114"/>
    </source>
</evidence>
<evidence type="ECO:0000255" key="4">
    <source>
        <dbReference type="PROSITE-ProRule" id="PRU00548"/>
    </source>
</evidence>
<evidence type="ECO:0000305" key="5"/>
<dbReference type="EMBL" id="AL021917">
    <property type="status" value="NOT_ANNOTATED_CDS"/>
    <property type="molecule type" value="Genomic_DNA"/>
</dbReference>
<dbReference type="EMBL" id="CH471087">
    <property type="protein sequence ID" value="EAW55569.1"/>
    <property type="molecule type" value="Genomic_DNA"/>
</dbReference>
<dbReference type="SMR" id="Q96KV6"/>
<dbReference type="FunCoup" id="Q96KV6">
    <property type="interactions" value="136"/>
</dbReference>
<dbReference type="IntAct" id="Q96KV6">
    <property type="interactions" value="6"/>
</dbReference>
<dbReference type="MINT" id="Q96KV6"/>
<dbReference type="GlyCosmos" id="Q96KV6">
    <property type="glycosylation" value="4 sites, No reported glycans"/>
</dbReference>
<dbReference type="GlyGen" id="Q96KV6">
    <property type="glycosylation" value="5 sites"/>
</dbReference>
<dbReference type="iPTMnet" id="Q96KV6"/>
<dbReference type="PhosphoSitePlus" id="Q96KV6"/>
<dbReference type="BioMuta" id="HGNC:13229"/>
<dbReference type="DMDM" id="152031567"/>
<dbReference type="jPOST" id="Q96KV6"/>
<dbReference type="MassIVE" id="Q96KV6"/>
<dbReference type="ProteomicsDB" id="77119"/>
<dbReference type="AGR" id="HGNC:13229"/>
<dbReference type="GeneCards" id="BTN2A3P"/>
<dbReference type="HGNC" id="HGNC:13229">
    <property type="gene designation" value="BTN2A3P"/>
</dbReference>
<dbReference type="MIM" id="613592">
    <property type="type" value="gene"/>
</dbReference>
<dbReference type="neXtProt" id="NX_Q96KV6"/>
<dbReference type="InParanoid" id="Q96KV6"/>
<dbReference type="PAN-GO" id="Q96KV6">
    <property type="GO annotations" value="4 GO annotations based on evolutionary models"/>
</dbReference>
<dbReference type="PhylomeDB" id="Q96KV6"/>
<dbReference type="PathwayCommons" id="Q96KV6"/>
<dbReference type="Pharos" id="Q96KV6">
    <property type="development level" value="Tdark"/>
</dbReference>
<dbReference type="Proteomes" id="UP000005640">
    <property type="component" value="Unplaced"/>
</dbReference>
<dbReference type="RNAct" id="Q96KV6">
    <property type="molecule type" value="protein"/>
</dbReference>
<dbReference type="GO" id="GO:0009897">
    <property type="term" value="C:external side of plasma membrane"/>
    <property type="evidence" value="ECO:0000318"/>
    <property type="project" value="GO_Central"/>
</dbReference>
<dbReference type="GO" id="GO:0005102">
    <property type="term" value="F:signaling receptor binding"/>
    <property type="evidence" value="ECO:0000318"/>
    <property type="project" value="GO_Central"/>
</dbReference>
<dbReference type="GO" id="GO:0001817">
    <property type="term" value="P:regulation of cytokine production"/>
    <property type="evidence" value="ECO:0000318"/>
    <property type="project" value="GO_Central"/>
</dbReference>
<dbReference type="GO" id="GO:0050852">
    <property type="term" value="P:T cell receptor signaling pathway"/>
    <property type="evidence" value="ECO:0000318"/>
    <property type="project" value="GO_Central"/>
</dbReference>
<dbReference type="CDD" id="cd05713">
    <property type="entry name" value="IgV_MOG_like"/>
    <property type="match status" value="1"/>
</dbReference>
<dbReference type="CDD" id="cd15819">
    <property type="entry name" value="SPRY_PRY_BTN1_2"/>
    <property type="match status" value="1"/>
</dbReference>
<dbReference type="FunFam" id="2.60.120.920:FF:000004">
    <property type="entry name" value="Butyrophilin subfamily 1 member A1"/>
    <property type="match status" value="1"/>
</dbReference>
<dbReference type="FunFam" id="2.60.40.10:FF:000088">
    <property type="entry name" value="Butyrophilin subfamily 1 member A1"/>
    <property type="match status" value="1"/>
</dbReference>
<dbReference type="FunFam" id="2.60.40.10:FF:000208">
    <property type="entry name" value="Butyrophilin subfamily 1 member A1"/>
    <property type="match status" value="1"/>
</dbReference>
<dbReference type="Gene3D" id="2.60.120.920">
    <property type="match status" value="1"/>
</dbReference>
<dbReference type="Gene3D" id="2.60.40.10">
    <property type="entry name" value="Immunoglobulins"/>
    <property type="match status" value="2"/>
</dbReference>
<dbReference type="InterPro" id="IPR001870">
    <property type="entry name" value="B30.2/SPRY"/>
</dbReference>
<dbReference type="InterPro" id="IPR043136">
    <property type="entry name" value="B30.2/SPRY_sf"/>
</dbReference>
<dbReference type="InterPro" id="IPR053896">
    <property type="entry name" value="BTN3A2-like_Ig-C"/>
</dbReference>
<dbReference type="InterPro" id="IPR003879">
    <property type="entry name" value="Butyrophylin_SPRY"/>
</dbReference>
<dbReference type="InterPro" id="IPR013320">
    <property type="entry name" value="ConA-like_dom_sf"/>
</dbReference>
<dbReference type="InterPro" id="IPR007110">
    <property type="entry name" value="Ig-like_dom"/>
</dbReference>
<dbReference type="InterPro" id="IPR036179">
    <property type="entry name" value="Ig-like_dom_sf"/>
</dbReference>
<dbReference type="InterPro" id="IPR013783">
    <property type="entry name" value="Ig-like_fold"/>
</dbReference>
<dbReference type="InterPro" id="IPR003599">
    <property type="entry name" value="Ig_sub"/>
</dbReference>
<dbReference type="InterPro" id="IPR013106">
    <property type="entry name" value="Ig_V-set"/>
</dbReference>
<dbReference type="InterPro" id="IPR050504">
    <property type="entry name" value="IgSF_BTN/MOG"/>
</dbReference>
<dbReference type="InterPro" id="IPR006574">
    <property type="entry name" value="PRY"/>
</dbReference>
<dbReference type="InterPro" id="IPR037958">
    <property type="entry name" value="SPRY/PRY_BTN1/2"/>
</dbReference>
<dbReference type="InterPro" id="IPR003877">
    <property type="entry name" value="SPRY_dom"/>
</dbReference>
<dbReference type="PANTHER" id="PTHR24100">
    <property type="entry name" value="BUTYROPHILIN"/>
    <property type="match status" value="1"/>
</dbReference>
<dbReference type="PANTHER" id="PTHR24100:SF110">
    <property type="entry name" value="BUTYROPHILIN SUBFAMILY 2 MEMBER A3-RELATED"/>
    <property type="match status" value="1"/>
</dbReference>
<dbReference type="Pfam" id="PF22705">
    <property type="entry name" value="C2-set_3"/>
    <property type="match status" value="1"/>
</dbReference>
<dbReference type="Pfam" id="PF13765">
    <property type="entry name" value="PRY"/>
    <property type="match status" value="1"/>
</dbReference>
<dbReference type="Pfam" id="PF00622">
    <property type="entry name" value="SPRY"/>
    <property type="match status" value="1"/>
</dbReference>
<dbReference type="Pfam" id="PF07686">
    <property type="entry name" value="V-set"/>
    <property type="match status" value="1"/>
</dbReference>
<dbReference type="PRINTS" id="PR01407">
    <property type="entry name" value="BUTYPHLNCDUF"/>
</dbReference>
<dbReference type="SMART" id="SM00409">
    <property type="entry name" value="IG"/>
    <property type="match status" value="1"/>
</dbReference>
<dbReference type="SMART" id="SM00406">
    <property type="entry name" value="IGv"/>
    <property type="match status" value="1"/>
</dbReference>
<dbReference type="SMART" id="SM00589">
    <property type="entry name" value="PRY"/>
    <property type="match status" value="1"/>
</dbReference>
<dbReference type="SMART" id="SM00449">
    <property type="entry name" value="SPRY"/>
    <property type="match status" value="1"/>
</dbReference>
<dbReference type="SUPFAM" id="SSF49899">
    <property type="entry name" value="Concanavalin A-like lectins/glucanases"/>
    <property type="match status" value="1"/>
</dbReference>
<dbReference type="SUPFAM" id="SSF48726">
    <property type="entry name" value="Immunoglobulin"/>
    <property type="match status" value="2"/>
</dbReference>
<dbReference type="PROSITE" id="PS50188">
    <property type="entry name" value="B302_SPRY"/>
    <property type="match status" value="1"/>
</dbReference>
<dbReference type="PROSITE" id="PS50835">
    <property type="entry name" value="IG_LIKE"/>
    <property type="match status" value="1"/>
</dbReference>